<reference key="1">
    <citation type="journal article" date="2007" name="Science">
        <title>The Fusarium graminearum genome reveals a link between localized polymorphism and pathogen specialization.</title>
        <authorList>
            <person name="Cuomo C.A."/>
            <person name="Gueldener U."/>
            <person name="Xu J.-R."/>
            <person name="Trail F."/>
            <person name="Turgeon B.G."/>
            <person name="Di Pietro A."/>
            <person name="Walton J.D."/>
            <person name="Ma L.-J."/>
            <person name="Baker S.E."/>
            <person name="Rep M."/>
            <person name="Adam G."/>
            <person name="Antoniw J."/>
            <person name="Baldwin T."/>
            <person name="Calvo S.E."/>
            <person name="Chang Y.-L."/>
            <person name="DeCaprio D."/>
            <person name="Gale L.R."/>
            <person name="Gnerre S."/>
            <person name="Goswami R.S."/>
            <person name="Hammond-Kosack K."/>
            <person name="Harris L.J."/>
            <person name="Hilburn K."/>
            <person name="Kennell J.C."/>
            <person name="Kroken S."/>
            <person name="Magnuson J.K."/>
            <person name="Mannhaupt G."/>
            <person name="Mauceli E.W."/>
            <person name="Mewes H.-W."/>
            <person name="Mitterbauer R."/>
            <person name="Muehlbauer G."/>
            <person name="Muensterkoetter M."/>
            <person name="Nelson D."/>
            <person name="O'Donnell K."/>
            <person name="Ouellet T."/>
            <person name="Qi W."/>
            <person name="Quesneville H."/>
            <person name="Roncero M.I.G."/>
            <person name="Seong K.-Y."/>
            <person name="Tetko I.V."/>
            <person name="Urban M."/>
            <person name="Waalwijk C."/>
            <person name="Ward T.J."/>
            <person name="Yao J."/>
            <person name="Birren B.W."/>
            <person name="Kistler H.C."/>
        </authorList>
    </citation>
    <scope>NUCLEOTIDE SEQUENCE [LARGE SCALE GENOMIC DNA]</scope>
    <source>
        <strain>ATCC MYA-4620 / CBS 123657 / FGSC 9075 / NRRL 31084 / PH-1</strain>
    </source>
</reference>
<reference key="2">
    <citation type="journal article" date="2010" name="Nature">
        <title>Comparative genomics reveals mobile pathogenicity chromosomes in Fusarium.</title>
        <authorList>
            <person name="Ma L.-J."/>
            <person name="van der Does H.C."/>
            <person name="Borkovich K.A."/>
            <person name="Coleman J.J."/>
            <person name="Daboussi M.-J."/>
            <person name="Di Pietro A."/>
            <person name="Dufresne M."/>
            <person name="Freitag M."/>
            <person name="Grabherr M."/>
            <person name="Henrissat B."/>
            <person name="Houterman P.M."/>
            <person name="Kang S."/>
            <person name="Shim W.-B."/>
            <person name="Woloshuk C."/>
            <person name="Xie X."/>
            <person name="Xu J.-R."/>
            <person name="Antoniw J."/>
            <person name="Baker S.E."/>
            <person name="Bluhm B.H."/>
            <person name="Breakspear A."/>
            <person name="Brown D.W."/>
            <person name="Butchko R.A.E."/>
            <person name="Chapman S."/>
            <person name="Coulson R."/>
            <person name="Coutinho P.M."/>
            <person name="Danchin E.G.J."/>
            <person name="Diener A."/>
            <person name="Gale L.R."/>
            <person name="Gardiner D.M."/>
            <person name="Goff S."/>
            <person name="Hammond-Kosack K.E."/>
            <person name="Hilburn K."/>
            <person name="Hua-Van A."/>
            <person name="Jonkers W."/>
            <person name="Kazan K."/>
            <person name="Kodira C.D."/>
            <person name="Koehrsen M."/>
            <person name="Kumar L."/>
            <person name="Lee Y.-H."/>
            <person name="Li L."/>
            <person name="Manners J.M."/>
            <person name="Miranda-Saavedra D."/>
            <person name="Mukherjee M."/>
            <person name="Park G."/>
            <person name="Park J."/>
            <person name="Park S.-Y."/>
            <person name="Proctor R.H."/>
            <person name="Regev A."/>
            <person name="Ruiz-Roldan M.C."/>
            <person name="Sain D."/>
            <person name="Sakthikumar S."/>
            <person name="Sykes S."/>
            <person name="Schwartz D.C."/>
            <person name="Turgeon B.G."/>
            <person name="Wapinski I."/>
            <person name="Yoder O."/>
            <person name="Young S."/>
            <person name="Zeng Q."/>
            <person name="Zhou S."/>
            <person name="Galagan J."/>
            <person name="Cuomo C.A."/>
            <person name="Kistler H.C."/>
            <person name="Rep M."/>
        </authorList>
    </citation>
    <scope>GENOME REANNOTATION</scope>
    <source>
        <strain>ATCC MYA-4620 / CBS 123657 / FGSC 9075 / NRRL 31084 / PH-1</strain>
    </source>
</reference>
<reference key="3">
    <citation type="journal article" date="2015" name="BMC Genomics">
        <title>The completed genome sequence of the pathogenic ascomycete fungus Fusarium graminearum.</title>
        <authorList>
            <person name="King R."/>
            <person name="Urban M."/>
            <person name="Hammond-Kosack M.C.U."/>
            <person name="Hassani-Pak K."/>
            <person name="Hammond-Kosack K.E."/>
        </authorList>
    </citation>
    <scope>NUCLEOTIDE SEQUENCE [LARGE SCALE GENOMIC DNA]</scope>
    <source>
        <strain>ATCC MYA-4620 / CBS 123657 / FGSC 9075 / NRRL 31084 / PH-1</strain>
    </source>
</reference>
<keyword id="KW-1003">Cell membrane</keyword>
<keyword id="KW-0168">Coated pit</keyword>
<keyword id="KW-0254">Endocytosis</keyword>
<keyword id="KW-0472">Membrane</keyword>
<keyword id="KW-0653">Protein transport</keyword>
<keyword id="KW-1185">Reference proteome</keyword>
<keyword id="KW-0813">Transport</keyword>
<dbReference type="EMBL" id="DS231665">
    <property type="protein sequence ID" value="ESU11011.1"/>
    <property type="molecule type" value="Genomic_DNA"/>
</dbReference>
<dbReference type="EMBL" id="HG970334">
    <property type="protein sequence ID" value="CEF85900.1"/>
    <property type="molecule type" value="Genomic_DNA"/>
</dbReference>
<dbReference type="RefSeq" id="XP_011323587.1">
    <property type="nucleotide sequence ID" value="XM_011325285.1"/>
</dbReference>
<dbReference type="SMR" id="Q4ICG5"/>
<dbReference type="FunCoup" id="Q4ICG5">
    <property type="interactions" value="472"/>
</dbReference>
<dbReference type="STRING" id="229533.Q4ICG5"/>
<dbReference type="GeneID" id="23552287"/>
<dbReference type="KEGG" id="fgr:FGSG_05093"/>
<dbReference type="VEuPathDB" id="FungiDB:FGRAMPH1_01G17083"/>
<dbReference type="eggNOG" id="KOG0935">
    <property type="taxonomic scope" value="Eukaryota"/>
</dbReference>
<dbReference type="HOGENOM" id="CLU_061221_3_2_1"/>
<dbReference type="InParanoid" id="Q4ICG5"/>
<dbReference type="OrthoDB" id="13138at110618"/>
<dbReference type="PHI-base" id="PHI:9145"/>
<dbReference type="Proteomes" id="UP000070720">
    <property type="component" value="Chromosome 3"/>
</dbReference>
<dbReference type="GO" id="GO:0030122">
    <property type="term" value="C:AP-2 adaptor complex"/>
    <property type="evidence" value="ECO:0007669"/>
    <property type="project" value="InterPro"/>
</dbReference>
<dbReference type="GO" id="GO:0035615">
    <property type="term" value="F:clathrin adaptor activity"/>
    <property type="evidence" value="ECO:0007669"/>
    <property type="project" value="InterPro"/>
</dbReference>
<dbReference type="GO" id="GO:0072583">
    <property type="term" value="P:clathrin-dependent endocytosis"/>
    <property type="evidence" value="ECO:0007669"/>
    <property type="project" value="InterPro"/>
</dbReference>
<dbReference type="GO" id="GO:0015031">
    <property type="term" value="P:protein transport"/>
    <property type="evidence" value="ECO:0007669"/>
    <property type="project" value="UniProtKB-KW"/>
</dbReference>
<dbReference type="CDD" id="cd14833">
    <property type="entry name" value="AP2_sigma"/>
    <property type="match status" value="1"/>
</dbReference>
<dbReference type="FunFam" id="3.30.450.60:FF:000011">
    <property type="entry name" value="AP complex subunit sigma"/>
    <property type="match status" value="1"/>
</dbReference>
<dbReference type="Gene3D" id="3.30.450.60">
    <property type="match status" value="1"/>
</dbReference>
<dbReference type="InterPro" id="IPR016635">
    <property type="entry name" value="AP_complex_ssu"/>
</dbReference>
<dbReference type="InterPro" id="IPR022775">
    <property type="entry name" value="AP_mu_sigma_su"/>
</dbReference>
<dbReference type="InterPro" id="IPR027156">
    <property type="entry name" value="APS2"/>
</dbReference>
<dbReference type="InterPro" id="IPR011012">
    <property type="entry name" value="Longin-like_dom_sf"/>
</dbReference>
<dbReference type="PANTHER" id="PTHR11753">
    <property type="entry name" value="ADAPTOR COMPLEXES SMALL SUBUNIT FAMILY"/>
    <property type="match status" value="1"/>
</dbReference>
<dbReference type="Pfam" id="PF01217">
    <property type="entry name" value="Clat_adaptor_s"/>
    <property type="match status" value="1"/>
</dbReference>
<dbReference type="PIRSF" id="PIRSF015588">
    <property type="entry name" value="AP_complex_sigma"/>
    <property type="match status" value="1"/>
</dbReference>
<dbReference type="SUPFAM" id="SSF64356">
    <property type="entry name" value="SNARE-like"/>
    <property type="match status" value="1"/>
</dbReference>
<evidence type="ECO:0000250" key="1"/>
<evidence type="ECO:0000305" key="2"/>
<feature type="chain" id="PRO_0000193811" description="AP-2 complex subunit sigma">
    <location>
        <begin position="1"/>
        <end position="143"/>
    </location>
</feature>
<organism>
    <name type="scientific">Gibberella zeae (strain ATCC MYA-4620 / CBS 123657 / FGSC 9075 / NRRL 31084 / PH-1)</name>
    <name type="common">Wheat head blight fungus</name>
    <name type="synonym">Fusarium graminearum</name>
    <dbReference type="NCBI Taxonomy" id="229533"/>
    <lineage>
        <taxon>Eukaryota</taxon>
        <taxon>Fungi</taxon>
        <taxon>Dikarya</taxon>
        <taxon>Ascomycota</taxon>
        <taxon>Pezizomycotina</taxon>
        <taxon>Sordariomycetes</taxon>
        <taxon>Hypocreomycetidae</taxon>
        <taxon>Hypocreales</taxon>
        <taxon>Nectriaceae</taxon>
        <taxon>Fusarium</taxon>
    </lineage>
</organism>
<protein>
    <recommendedName>
        <fullName>AP-2 complex subunit sigma</fullName>
    </recommendedName>
    <alternativeName>
        <fullName>Adaptin small chain</fullName>
    </alternativeName>
    <alternativeName>
        <fullName>Clathrin assembly protein 2 sigma small chain</fullName>
    </alternativeName>
    <alternativeName>
        <fullName>Sigma2-adaptin</fullName>
    </alternativeName>
</protein>
<sequence>MLSFILIQNRQGKTRLAKWYAPFSDEQKIKLKGEVHRLVAPRDQKYQSNFVEFRNNKIVYRRYAGLFFCACVDTNDNELAFLEAIHFFVEVLDAFFGNVCELDLVFNFYKVYAILDEVFLAGEIEETSKQVVLTRLEHLDKLE</sequence>
<comment type="function">
    <text evidence="1">Component of the adaptor complexes which link clathrin to receptors in coated vesicles. Clathrin-associated protein complexes are believed to interact with the cytoplasmic tails of membrane proteins, leading to their selection and concentration (By similarity).</text>
</comment>
<comment type="subunit">
    <text evidence="1">Adaptor protein complex 2 (AP-2) is a heterotetramer composed of two large adaptins (alpha-type subunit APL3 and beta-type subunit APL1), a medium chain (mu-type subunit APM4) and a small adaptin (sigma-type subunit APS2).</text>
</comment>
<comment type="subcellular location">
    <subcellularLocation>
        <location evidence="1">Cell membrane</location>
    </subcellularLocation>
    <subcellularLocation>
        <location evidence="1">Membrane</location>
        <location evidence="1">Coated pit</location>
        <topology evidence="1">Peripheral membrane protein</topology>
        <orientation evidence="1">Cytoplasmic side</orientation>
    </subcellularLocation>
    <text evidence="1">Component of the coat surrounding the cytoplasmic face of the plasma membrane coated vesicles.</text>
</comment>
<comment type="similarity">
    <text evidence="2">Belongs to the adaptor complexes small subunit family.</text>
</comment>
<accession>Q4ICG5</accession>
<accession>A0A0E0SHI7</accession>
<accession>V6R9B9</accession>
<gene>
    <name type="primary">APS2</name>
    <name type="ORF">FGRRES_05093</name>
    <name type="ORF">FGSG_05093</name>
</gene>
<proteinExistence type="inferred from homology"/>
<name>AP2S_GIBZE</name>